<keyword id="KW-1185">Reference proteome</keyword>
<keyword id="KW-0687">Ribonucleoprotein</keyword>
<keyword id="KW-0689">Ribosomal protein</keyword>
<accession>Q1CVF8</accession>
<protein>
    <recommendedName>
        <fullName evidence="1">Large ribosomal subunit protein bL34</fullName>
    </recommendedName>
    <alternativeName>
        <fullName evidence="3">50S ribosomal protein L34</fullName>
    </alternativeName>
</protein>
<feature type="chain" id="PRO_1000196074" description="Large ribosomal subunit protein bL34">
    <location>
        <begin position="1"/>
        <end position="50"/>
    </location>
</feature>
<feature type="region of interest" description="Disordered" evidence="2">
    <location>
        <begin position="1"/>
        <end position="50"/>
    </location>
</feature>
<feature type="compositionally biased region" description="Basic residues" evidence="2">
    <location>
        <begin position="10"/>
        <end position="24"/>
    </location>
</feature>
<feature type="compositionally biased region" description="Basic residues" evidence="2">
    <location>
        <begin position="32"/>
        <end position="50"/>
    </location>
</feature>
<organism>
    <name type="scientific">Myxococcus xanthus (strain DK1622)</name>
    <dbReference type="NCBI Taxonomy" id="246197"/>
    <lineage>
        <taxon>Bacteria</taxon>
        <taxon>Pseudomonadati</taxon>
        <taxon>Myxococcota</taxon>
        <taxon>Myxococcia</taxon>
        <taxon>Myxococcales</taxon>
        <taxon>Cystobacterineae</taxon>
        <taxon>Myxococcaceae</taxon>
        <taxon>Myxococcus</taxon>
    </lineage>
</organism>
<reference key="1">
    <citation type="journal article" date="2006" name="Proc. Natl. Acad. Sci. U.S.A.">
        <title>Evolution of sensory complexity recorded in a myxobacterial genome.</title>
        <authorList>
            <person name="Goldman B.S."/>
            <person name="Nierman W.C."/>
            <person name="Kaiser D."/>
            <person name="Slater S.C."/>
            <person name="Durkin A.S."/>
            <person name="Eisen J.A."/>
            <person name="Ronning C.M."/>
            <person name="Barbazuk W.B."/>
            <person name="Blanchard M."/>
            <person name="Field C."/>
            <person name="Halling C."/>
            <person name="Hinkle G."/>
            <person name="Iartchuk O."/>
            <person name="Kim H.S."/>
            <person name="Mackenzie C."/>
            <person name="Madupu R."/>
            <person name="Miller N."/>
            <person name="Shvartsbeyn A."/>
            <person name="Sullivan S.A."/>
            <person name="Vaudin M."/>
            <person name="Wiegand R."/>
            <person name="Kaplan H.B."/>
        </authorList>
    </citation>
    <scope>NUCLEOTIDE SEQUENCE [LARGE SCALE GENOMIC DNA]</scope>
    <source>
        <strain>DK1622</strain>
    </source>
</reference>
<comment type="similarity">
    <text evidence="1">Belongs to the bacterial ribosomal protein bL34 family.</text>
</comment>
<dbReference type="EMBL" id="CP000113">
    <property type="protein sequence ID" value="ABF86684.1"/>
    <property type="molecule type" value="Genomic_DNA"/>
</dbReference>
<dbReference type="RefSeq" id="WP_002637840.1">
    <property type="nucleotide sequence ID" value="NC_008095.1"/>
</dbReference>
<dbReference type="SMR" id="Q1CVF8"/>
<dbReference type="STRING" id="246197.MXAN_7512"/>
<dbReference type="EnsemblBacteria" id="ABF86684">
    <property type="protein sequence ID" value="ABF86684"/>
    <property type="gene ID" value="MXAN_7512"/>
</dbReference>
<dbReference type="GeneID" id="41364645"/>
<dbReference type="KEGG" id="mxa:MXAN_7512"/>
<dbReference type="eggNOG" id="COG0230">
    <property type="taxonomic scope" value="Bacteria"/>
</dbReference>
<dbReference type="HOGENOM" id="CLU_129938_2_0_7"/>
<dbReference type="OrthoDB" id="9804164at2"/>
<dbReference type="Proteomes" id="UP000002402">
    <property type="component" value="Chromosome"/>
</dbReference>
<dbReference type="GO" id="GO:1990904">
    <property type="term" value="C:ribonucleoprotein complex"/>
    <property type="evidence" value="ECO:0007669"/>
    <property type="project" value="UniProtKB-KW"/>
</dbReference>
<dbReference type="GO" id="GO:0005840">
    <property type="term" value="C:ribosome"/>
    <property type="evidence" value="ECO:0007669"/>
    <property type="project" value="UniProtKB-KW"/>
</dbReference>
<dbReference type="GO" id="GO:0003735">
    <property type="term" value="F:structural constituent of ribosome"/>
    <property type="evidence" value="ECO:0007669"/>
    <property type="project" value="InterPro"/>
</dbReference>
<dbReference type="GO" id="GO:0006412">
    <property type="term" value="P:translation"/>
    <property type="evidence" value="ECO:0007669"/>
    <property type="project" value="UniProtKB-UniRule"/>
</dbReference>
<dbReference type="FunFam" id="1.10.287.3980:FF:000001">
    <property type="entry name" value="Mitochondrial ribosomal protein L34"/>
    <property type="match status" value="1"/>
</dbReference>
<dbReference type="Gene3D" id="1.10.287.3980">
    <property type="match status" value="1"/>
</dbReference>
<dbReference type="HAMAP" id="MF_00391">
    <property type="entry name" value="Ribosomal_bL34"/>
    <property type="match status" value="1"/>
</dbReference>
<dbReference type="InterPro" id="IPR000271">
    <property type="entry name" value="Ribosomal_bL34"/>
</dbReference>
<dbReference type="InterPro" id="IPR020939">
    <property type="entry name" value="Ribosomal_bL34_CS"/>
</dbReference>
<dbReference type="NCBIfam" id="TIGR01030">
    <property type="entry name" value="rpmH_bact"/>
    <property type="match status" value="1"/>
</dbReference>
<dbReference type="PANTHER" id="PTHR14503:SF4">
    <property type="entry name" value="LARGE RIBOSOMAL SUBUNIT PROTEIN BL34M"/>
    <property type="match status" value="1"/>
</dbReference>
<dbReference type="PANTHER" id="PTHR14503">
    <property type="entry name" value="MITOCHONDRIAL RIBOSOMAL PROTEIN 34 FAMILY MEMBER"/>
    <property type="match status" value="1"/>
</dbReference>
<dbReference type="Pfam" id="PF00468">
    <property type="entry name" value="Ribosomal_L34"/>
    <property type="match status" value="1"/>
</dbReference>
<dbReference type="PROSITE" id="PS00784">
    <property type="entry name" value="RIBOSOMAL_L34"/>
    <property type="match status" value="1"/>
</dbReference>
<proteinExistence type="inferred from homology"/>
<sequence length="50" mass="5889">MSKRTYQPSKVRRNRAHGFRKRNATKGGRDVLKRRRAKGRKRLVVSAPKK</sequence>
<gene>
    <name evidence="1" type="primary">rpmH</name>
    <name type="ordered locus">MXAN_7512</name>
</gene>
<name>RL34_MYXXD</name>
<evidence type="ECO:0000255" key="1">
    <source>
        <dbReference type="HAMAP-Rule" id="MF_00391"/>
    </source>
</evidence>
<evidence type="ECO:0000256" key="2">
    <source>
        <dbReference type="SAM" id="MobiDB-lite"/>
    </source>
</evidence>
<evidence type="ECO:0000305" key="3"/>